<protein>
    <recommendedName>
        <fullName evidence="5">3-keto-5-aminohexanoate cleavage enzyme</fullName>
        <ecNumber evidence="3">2.3.1.247</ecNumber>
    </recommendedName>
</protein>
<gene>
    <name evidence="4" type="primary">kce</name>
    <name type="ordered locus">FN1868</name>
</gene>
<dbReference type="EC" id="2.3.1.247" evidence="3"/>
<dbReference type="EMBL" id="AE009951">
    <property type="protein sequence ID" value="AAL93967.1"/>
    <property type="molecule type" value="Genomic_DNA"/>
</dbReference>
<dbReference type="RefSeq" id="NP_602668.1">
    <property type="nucleotide sequence ID" value="NC_003454.1"/>
</dbReference>
<dbReference type="RefSeq" id="WP_011015885.1">
    <property type="nucleotide sequence ID" value="NZ_OZ209243.1"/>
</dbReference>
<dbReference type="SMR" id="Q8RHX2"/>
<dbReference type="STRING" id="190304.FN1868"/>
<dbReference type="PaxDb" id="190304-FN1868"/>
<dbReference type="EnsemblBacteria" id="AAL93967">
    <property type="protein sequence ID" value="AAL93967"/>
    <property type="gene ID" value="FN1868"/>
</dbReference>
<dbReference type="GeneID" id="79783110"/>
<dbReference type="KEGG" id="fnu:FN1868"/>
<dbReference type="PATRIC" id="fig|190304.8.peg.344"/>
<dbReference type="eggNOG" id="COG3246">
    <property type="taxonomic scope" value="Bacteria"/>
</dbReference>
<dbReference type="HOGENOM" id="CLU_065536_2_0_0"/>
<dbReference type="InParanoid" id="Q8RHX2"/>
<dbReference type="BioCyc" id="FNUC190304:G1FZS-365-MONOMER"/>
<dbReference type="BioCyc" id="MetaCyc:MONOMER-12289"/>
<dbReference type="BRENDA" id="2.3.1.247">
    <property type="organism ID" value="11865"/>
</dbReference>
<dbReference type="UniPathway" id="UPA00870"/>
<dbReference type="Proteomes" id="UP000002521">
    <property type="component" value="Chromosome"/>
</dbReference>
<dbReference type="GO" id="GO:0043720">
    <property type="term" value="F:3-keto-5-aminohexanoate cleavage activity"/>
    <property type="evidence" value="ECO:0007669"/>
    <property type="project" value="InterPro"/>
</dbReference>
<dbReference type="GO" id="GO:0046872">
    <property type="term" value="F:metal ion binding"/>
    <property type="evidence" value="ECO:0007669"/>
    <property type="project" value="UniProtKB-KW"/>
</dbReference>
<dbReference type="GO" id="GO:0019475">
    <property type="term" value="P:L-lysine catabolic process to acetate"/>
    <property type="evidence" value="ECO:0007669"/>
    <property type="project" value="UniProtKB-UniPathway"/>
</dbReference>
<dbReference type="Gene3D" id="3.20.20.70">
    <property type="entry name" value="Aldolase class I"/>
    <property type="match status" value="1"/>
</dbReference>
<dbReference type="InterPro" id="IPR013785">
    <property type="entry name" value="Aldolase_TIM"/>
</dbReference>
<dbReference type="InterPro" id="IPR008567">
    <property type="entry name" value="BKACE"/>
</dbReference>
<dbReference type="PANTHER" id="PTHR37418:SF2">
    <property type="entry name" value="3-KETO-5-AMINOHEXANOATE CLEAVAGE ENZYME"/>
    <property type="match status" value="1"/>
</dbReference>
<dbReference type="PANTHER" id="PTHR37418">
    <property type="entry name" value="3-KETO-5-AMINOHEXANOATE CLEAVAGE ENZYME-RELATED"/>
    <property type="match status" value="1"/>
</dbReference>
<dbReference type="Pfam" id="PF05853">
    <property type="entry name" value="BKACE"/>
    <property type="match status" value="1"/>
</dbReference>
<dbReference type="SUPFAM" id="SSF102114">
    <property type="entry name" value="Radical SAM enzymes"/>
    <property type="match status" value="1"/>
</dbReference>
<proteinExistence type="evidence at protein level"/>
<name>KCE_FUSNN</name>
<feature type="chain" id="PRO_0000416977" description="3-keto-5-aminohexanoate cleavage enzyme">
    <location>
        <begin position="1"/>
        <end position="272"/>
    </location>
</feature>
<feature type="binding site" evidence="1">
    <location>
        <position position="15"/>
    </location>
    <ligand>
        <name>(5S)-5-amino-3-oxohexanoate</name>
        <dbReference type="ChEBI" id="CHEBI:58523"/>
    </ligand>
</feature>
<feature type="binding site" evidence="1">
    <location>
        <position position="47"/>
    </location>
    <ligand>
        <name>Zn(2+)</name>
        <dbReference type="ChEBI" id="CHEBI:29105"/>
    </ligand>
</feature>
<feature type="binding site" evidence="1">
    <location>
        <position position="49"/>
    </location>
    <ligand>
        <name>Zn(2+)</name>
        <dbReference type="ChEBI" id="CHEBI:29105"/>
    </ligand>
</feature>
<feature type="binding site" evidence="1">
    <location>
        <position position="83"/>
    </location>
    <ligand>
        <name>(5S)-5-amino-3-oxohexanoate</name>
        <dbReference type="ChEBI" id="CHEBI:58523"/>
    </ligand>
</feature>
<feature type="binding site" evidence="1">
    <location>
        <position position="86"/>
    </location>
    <ligand>
        <name>(5S)-5-amino-3-oxohexanoate</name>
        <dbReference type="ChEBI" id="CHEBI:58523"/>
    </ligand>
</feature>
<feature type="binding site" evidence="1">
    <location>
        <position position="107"/>
    </location>
    <ligand>
        <name>(5S)-5-amino-3-oxohexanoate</name>
        <dbReference type="ChEBI" id="CHEBI:58523"/>
    </ligand>
</feature>
<feature type="binding site" evidence="1">
    <location>
        <position position="226"/>
    </location>
    <ligand>
        <name>Zn(2+)</name>
        <dbReference type="ChEBI" id="CHEBI:29105"/>
    </ligand>
</feature>
<keyword id="KW-0479">Metal-binding</keyword>
<keyword id="KW-1185">Reference proteome</keyword>
<keyword id="KW-0808">Transferase</keyword>
<keyword id="KW-0862">Zinc</keyword>
<evidence type="ECO:0000250" key="1">
    <source>
        <dbReference type="UniProtKB" id="B0VHH0"/>
    </source>
</evidence>
<evidence type="ECO:0000269" key="2">
    <source>
    </source>
</evidence>
<evidence type="ECO:0000269" key="3">
    <source>
    </source>
</evidence>
<evidence type="ECO:0000303" key="4">
    <source>
    </source>
</evidence>
<evidence type="ECO:0000303" key="5">
    <source>
    </source>
</evidence>
<evidence type="ECO:0000305" key="6"/>
<evidence type="ECO:0000305" key="7">
    <source>
    </source>
</evidence>
<reference key="1">
    <citation type="journal article" date="2002" name="J. Bacteriol.">
        <title>Genome sequence and analysis of the oral bacterium Fusobacterium nucleatum strain ATCC 25586.</title>
        <authorList>
            <person name="Kapatral V."/>
            <person name="Anderson I."/>
            <person name="Ivanova N."/>
            <person name="Reznik G."/>
            <person name="Los T."/>
            <person name="Lykidis A."/>
            <person name="Bhattacharyya A."/>
            <person name="Bartman A."/>
            <person name="Gardner W."/>
            <person name="Grechkin G."/>
            <person name="Zhu L."/>
            <person name="Vasieva O."/>
            <person name="Chu L."/>
            <person name="Kogan Y."/>
            <person name="Chaga O."/>
            <person name="Goltsman E."/>
            <person name="Bernal A."/>
            <person name="Larsen N."/>
            <person name="D'Souza M."/>
            <person name="Walunas T."/>
            <person name="Pusch G."/>
            <person name="Haselkorn R."/>
            <person name="Fonstein M."/>
            <person name="Kyrpides N.C."/>
            <person name="Overbeek R."/>
        </authorList>
    </citation>
    <scope>NUCLEOTIDE SEQUENCE [LARGE SCALE GENOMIC DNA]</scope>
    <source>
        <strain>ATCC 25586 / DSM 15643 / BCRC 10681 / CIP 101130 / JCM 8532 / KCTC 2640 / LMG 13131 / VPI 4355</strain>
    </source>
</reference>
<reference key="2">
    <citation type="journal article" date="1982" name="J. Bacteriol.">
        <title>Pathway of lysine degradation in Fusobacterium nucleatum.</title>
        <authorList>
            <person name="Barker H.A."/>
            <person name="Kahn J.M."/>
            <person name="Hedrick L."/>
        </authorList>
    </citation>
    <scope>FUNCTION</scope>
    <scope>CATALYTIC ACTIVITY</scope>
    <scope>ACTIVITY REGULATION</scope>
    <scope>BIOPHYSICOCHEMICAL PROPERTIES</scope>
    <scope>PATHWAY</scope>
    <scope>SUBSTRATE SPECIFICITY</scope>
    <source>
        <strain evidence="3">ATCC 25586 / DSM 15643 / BCRC 10681 / CIP 101130 / JCM 8532 / KCTC 2640 / LMG 13131 / VPI 4355</strain>
    </source>
</reference>
<reference key="3">
    <citation type="journal article" date="2007" name="J. Biol. Chem.">
        <title>Identification of the last unknown genes in the fermentation pathway of lysine.</title>
        <authorList>
            <person name="Kreimeyer A."/>
            <person name="Perret A."/>
            <person name="Lechaplais C."/>
            <person name="Vallenet D."/>
            <person name="Medigue C."/>
            <person name="Salanoubat M."/>
            <person name="Weissenbach J."/>
        </authorList>
    </citation>
    <scope>FUNCTION</scope>
    <scope>PATHWAY</scope>
    <scope>SUBUNIT</scope>
    <source>
        <strain evidence="2">ATCC 25586 / DSM 15643 / BCRC 10681 / CIP 101130 / JCM 8532 / KCTC 2640 / LMG 13131 / VPI 4355</strain>
    </source>
</reference>
<comment type="function">
    <text evidence="2 3">Involved in the anaerobic fermentation of lysine. Catalyzes the reversible reaction between 3-keto-5-aminohexanoate (KAH) and acetyl-CoA to form 3-aminobutyryl-CoA and acetoacetate. The reaction involves the deprotonation of KAH, the nucleophilic addition onto acetyl-CoA and the intramolecular transfer of the CoA moiety. It can also use beta-alanyl-CoA as substrate.</text>
</comment>
<comment type="catalytic activity">
    <reaction evidence="3">
        <text>(5S)-5-amino-3-oxohexanoate + acetyl-CoA = (3S)-3-aminobutanoyl-CoA + acetoacetate</text>
        <dbReference type="Rhea" id="RHEA:31555"/>
        <dbReference type="ChEBI" id="CHEBI:13705"/>
        <dbReference type="ChEBI" id="CHEBI:57288"/>
        <dbReference type="ChEBI" id="CHEBI:57366"/>
        <dbReference type="ChEBI" id="CHEBI:58523"/>
        <dbReference type="EC" id="2.3.1.247"/>
    </reaction>
</comment>
<comment type="cofactor">
    <cofactor evidence="1">
        <name>Zn(2+)</name>
        <dbReference type="ChEBI" id="CHEBI:29105"/>
    </cofactor>
</comment>
<comment type="activity regulation">
    <text evidence="3">3-fold increase in activity by addition of 10 mM 2-mercaptoethanol. Addition of CoCl(2) and to a lesser extent MnCl(2) increases the activity but not MgCl(2). Inhibited by phosphate buffer but not by 5,5'-dithio-2-nitrobenzoic acid.</text>
</comment>
<comment type="biophysicochemical properties">
    <phDependence>
        <text evidence="3">Optimum pH is 6.5-7.0. The half-maximal rate is observed at pH 5.2 and 8.1.</text>
    </phDependence>
</comment>
<comment type="pathway">
    <text evidence="3 7">Amino-acid degradation; L-lysine degradation via acetate pathway.</text>
</comment>
<comment type="subunit">
    <text evidence="2">Homotetramer.</text>
</comment>
<comment type="similarity">
    <text evidence="6">Belongs to the BKACE family. Kce subfamily.</text>
</comment>
<accession>Q8RHX2</accession>
<organism>
    <name type="scientific">Fusobacterium nucleatum subsp. nucleatum (strain ATCC 25586 / DSM 15643 / BCRC 10681 / CIP 101130 / JCM 8532 / KCTC 2640 / LMG 13131 / VPI 4355)</name>
    <dbReference type="NCBI Taxonomy" id="190304"/>
    <lineage>
        <taxon>Bacteria</taxon>
        <taxon>Fusobacteriati</taxon>
        <taxon>Fusobacteriota</taxon>
        <taxon>Fusobacteriia</taxon>
        <taxon>Fusobacteriales</taxon>
        <taxon>Fusobacteriaceae</taxon>
        <taxon>Fusobacterium</taxon>
    </lineage>
</organism>
<sequence>MMEKLIITAAICGAEVTKEHNPAVPYTVEEIAREAESAYKAGASIIHLHVREDDGTPTQDKERFRKCIEAIREKCPDVIIQPSTGGAVGMTDLERLQPTELHPEMATLDCGTCNFGGDEIFVNTENTIKNFGKILIERGVKPEIEVFDKGMIDYAIRYQKQGFIQKPMHFDFVLGVQMSASARDLVFMSESIPEGSTWTVAGVGRHQFQMAALAIVMGGHVRVGFEDNVYIDKGILAKSNGELVERVVRLAKELGREIATPDEARQILSLKK</sequence>